<proteinExistence type="inferred from homology"/>
<dbReference type="EMBL" id="Z18631">
    <property type="protein sequence ID" value="CAA79230.1"/>
    <property type="molecule type" value="Genomic_DNA"/>
</dbReference>
<dbReference type="EMBL" id="AL009126">
    <property type="protein sequence ID" value="CAB13532.1"/>
    <property type="molecule type" value="Genomic_DNA"/>
</dbReference>
<dbReference type="PIR" id="B36905">
    <property type="entry name" value="B36905"/>
</dbReference>
<dbReference type="RefSeq" id="NP_389541.1">
    <property type="nucleotide sequence ID" value="NC_000964.3"/>
</dbReference>
<dbReference type="RefSeq" id="WP_003231915.1">
    <property type="nucleotide sequence ID" value="NZ_OZ025638.1"/>
</dbReference>
<dbReference type="SMR" id="P32726"/>
<dbReference type="FunCoup" id="P32726">
    <property type="interactions" value="335"/>
</dbReference>
<dbReference type="STRING" id="224308.BSU16590"/>
<dbReference type="PaxDb" id="224308-BSU16590"/>
<dbReference type="EnsemblBacteria" id="CAB13532">
    <property type="protein sequence ID" value="CAB13532"/>
    <property type="gene ID" value="BSU_16590"/>
</dbReference>
<dbReference type="GeneID" id="939625"/>
<dbReference type="KEGG" id="bsu:BSU16590"/>
<dbReference type="PATRIC" id="fig|224308.179.peg.1800"/>
<dbReference type="eggNOG" id="COG0779">
    <property type="taxonomic scope" value="Bacteria"/>
</dbReference>
<dbReference type="InParanoid" id="P32726"/>
<dbReference type="OrthoDB" id="9805006at2"/>
<dbReference type="PhylomeDB" id="P32726"/>
<dbReference type="BioCyc" id="BSUB:BSU16590-MONOMER"/>
<dbReference type="Proteomes" id="UP000001570">
    <property type="component" value="Chromosome"/>
</dbReference>
<dbReference type="GO" id="GO:0005829">
    <property type="term" value="C:cytosol"/>
    <property type="evidence" value="ECO:0000318"/>
    <property type="project" value="GO_Central"/>
</dbReference>
<dbReference type="GO" id="GO:0000028">
    <property type="term" value="P:ribosomal small subunit assembly"/>
    <property type="evidence" value="ECO:0000318"/>
    <property type="project" value="GO_Central"/>
</dbReference>
<dbReference type="GO" id="GO:0006412">
    <property type="term" value="P:translation"/>
    <property type="evidence" value="ECO:0000318"/>
    <property type="project" value="GO_Central"/>
</dbReference>
<dbReference type="CDD" id="cd01734">
    <property type="entry name" value="YlxS_C"/>
    <property type="match status" value="1"/>
</dbReference>
<dbReference type="FunFam" id="3.30.300.70:FF:000001">
    <property type="entry name" value="Ribosome maturation factor RimP"/>
    <property type="match status" value="1"/>
</dbReference>
<dbReference type="Gene3D" id="2.30.30.180">
    <property type="entry name" value="Ribosome maturation factor RimP, C-terminal domain"/>
    <property type="match status" value="1"/>
</dbReference>
<dbReference type="Gene3D" id="3.30.300.70">
    <property type="entry name" value="RimP-like superfamily, N-terminal"/>
    <property type="match status" value="1"/>
</dbReference>
<dbReference type="HAMAP" id="MF_01077">
    <property type="entry name" value="RimP"/>
    <property type="match status" value="1"/>
</dbReference>
<dbReference type="InterPro" id="IPR003728">
    <property type="entry name" value="Ribosome_maturation_RimP"/>
</dbReference>
<dbReference type="InterPro" id="IPR028998">
    <property type="entry name" value="RimP_C"/>
</dbReference>
<dbReference type="InterPro" id="IPR036847">
    <property type="entry name" value="RimP_C_sf"/>
</dbReference>
<dbReference type="InterPro" id="IPR028989">
    <property type="entry name" value="RimP_N"/>
</dbReference>
<dbReference type="InterPro" id="IPR035956">
    <property type="entry name" value="RimP_N_sf"/>
</dbReference>
<dbReference type="NCBIfam" id="NF000928">
    <property type="entry name" value="PRK00092.1-2"/>
    <property type="match status" value="1"/>
</dbReference>
<dbReference type="PANTHER" id="PTHR33867">
    <property type="entry name" value="RIBOSOME MATURATION FACTOR RIMP"/>
    <property type="match status" value="1"/>
</dbReference>
<dbReference type="PANTHER" id="PTHR33867:SF1">
    <property type="entry name" value="RIBOSOME MATURATION FACTOR RIMP"/>
    <property type="match status" value="1"/>
</dbReference>
<dbReference type="Pfam" id="PF17384">
    <property type="entry name" value="DUF150_C"/>
    <property type="match status" value="1"/>
</dbReference>
<dbReference type="Pfam" id="PF02576">
    <property type="entry name" value="RimP_N"/>
    <property type="match status" value="1"/>
</dbReference>
<dbReference type="SUPFAM" id="SSF74942">
    <property type="entry name" value="YhbC-like, C-terminal domain"/>
    <property type="match status" value="1"/>
</dbReference>
<dbReference type="SUPFAM" id="SSF75420">
    <property type="entry name" value="YhbC-like, N-terminal domain"/>
    <property type="match status" value="1"/>
</dbReference>
<gene>
    <name evidence="1" type="primary">rimP</name>
    <name type="synonym">ylxS</name>
    <name type="synonym">ymxA</name>
    <name type="ordered locus">BSU16590</name>
</gene>
<accession>P32726</accession>
<reference key="1">
    <citation type="journal article" date="1993" name="J. Bacteriol.">
        <title>Similar organization of the nusA-infB operon in Bacillus subtilis and Escherichia coli.</title>
        <authorList>
            <person name="Shazand K."/>
            <person name="Tucker J."/>
            <person name="Grunberg-Manago M."/>
            <person name="Rabinowitz J.C."/>
            <person name="Leighton T."/>
        </authorList>
    </citation>
    <scope>NUCLEOTIDE SEQUENCE [GENOMIC DNA]</scope>
    <source>
        <strain>168</strain>
    </source>
</reference>
<reference key="2">
    <citation type="journal article" date="1997" name="Nature">
        <title>The complete genome sequence of the Gram-positive bacterium Bacillus subtilis.</title>
        <authorList>
            <person name="Kunst F."/>
            <person name="Ogasawara N."/>
            <person name="Moszer I."/>
            <person name="Albertini A.M."/>
            <person name="Alloni G."/>
            <person name="Azevedo V."/>
            <person name="Bertero M.G."/>
            <person name="Bessieres P."/>
            <person name="Bolotin A."/>
            <person name="Borchert S."/>
            <person name="Borriss R."/>
            <person name="Boursier L."/>
            <person name="Brans A."/>
            <person name="Braun M."/>
            <person name="Brignell S.C."/>
            <person name="Bron S."/>
            <person name="Brouillet S."/>
            <person name="Bruschi C.V."/>
            <person name="Caldwell B."/>
            <person name="Capuano V."/>
            <person name="Carter N.M."/>
            <person name="Choi S.-K."/>
            <person name="Codani J.-J."/>
            <person name="Connerton I.F."/>
            <person name="Cummings N.J."/>
            <person name="Daniel R.A."/>
            <person name="Denizot F."/>
            <person name="Devine K.M."/>
            <person name="Duesterhoeft A."/>
            <person name="Ehrlich S.D."/>
            <person name="Emmerson P.T."/>
            <person name="Entian K.-D."/>
            <person name="Errington J."/>
            <person name="Fabret C."/>
            <person name="Ferrari E."/>
            <person name="Foulger D."/>
            <person name="Fritz C."/>
            <person name="Fujita M."/>
            <person name="Fujita Y."/>
            <person name="Fuma S."/>
            <person name="Galizzi A."/>
            <person name="Galleron N."/>
            <person name="Ghim S.-Y."/>
            <person name="Glaser P."/>
            <person name="Goffeau A."/>
            <person name="Golightly E.J."/>
            <person name="Grandi G."/>
            <person name="Guiseppi G."/>
            <person name="Guy B.J."/>
            <person name="Haga K."/>
            <person name="Haiech J."/>
            <person name="Harwood C.R."/>
            <person name="Henaut A."/>
            <person name="Hilbert H."/>
            <person name="Holsappel S."/>
            <person name="Hosono S."/>
            <person name="Hullo M.-F."/>
            <person name="Itaya M."/>
            <person name="Jones L.-M."/>
            <person name="Joris B."/>
            <person name="Karamata D."/>
            <person name="Kasahara Y."/>
            <person name="Klaerr-Blanchard M."/>
            <person name="Klein C."/>
            <person name="Kobayashi Y."/>
            <person name="Koetter P."/>
            <person name="Koningstein G."/>
            <person name="Krogh S."/>
            <person name="Kumano M."/>
            <person name="Kurita K."/>
            <person name="Lapidus A."/>
            <person name="Lardinois S."/>
            <person name="Lauber J."/>
            <person name="Lazarevic V."/>
            <person name="Lee S.-M."/>
            <person name="Levine A."/>
            <person name="Liu H."/>
            <person name="Masuda S."/>
            <person name="Mauel C."/>
            <person name="Medigue C."/>
            <person name="Medina N."/>
            <person name="Mellado R.P."/>
            <person name="Mizuno M."/>
            <person name="Moestl D."/>
            <person name="Nakai S."/>
            <person name="Noback M."/>
            <person name="Noone D."/>
            <person name="O'Reilly M."/>
            <person name="Ogawa K."/>
            <person name="Ogiwara A."/>
            <person name="Oudega B."/>
            <person name="Park S.-H."/>
            <person name="Parro V."/>
            <person name="Pohl T.M."/>
            <person name="Portetelle D."/>
            <person name="Porwollik S."/>
            <person name="Prescott A.M."/>
            <person name="Presecan E."/>
            <person name="Pujic P."/>
            <person name="Purnelle B."/>
            <person name="Rapoport G."/>
            <person name="Rey M."/>
            <person name="Reynolds S."/>
            <person name="Rieger M."/>
            <person name="Rivolta C."/>
            <person name="Rocha E."/>
            <person name="Roche B."/>
            <person name="Rose M."/>
            <person name="Sadaie Y."/>
            <person name="Sato T."/>
            <person name="Scanlan E."/>
            <person name="Schleich S."/>
            <person name="Schroeter R."/>
            <person name="Scoffone F."/>
            <person name="Sekiguchi J."/>
            <person name="Sekowska A."/>
            <person name="Seror S.J."/>
            <person name="Serror P."/>
            <person name="Shin B.-S."/>
            <person name="Soldo B."/>
            <person name="Sorokin A."/>
            <person name="Tacconi E."/>
            <person name="Takagi T."/>
            <person name="Takahashi H."/>
            <person name="Takemaru K."/>
            <person name="Takeuchi M."/>
            <person name="Tamakoshi A."/>
            <person name="Tanaka T."/>
            <person name="Terpstra P."/>
            <person name="Tognoni A."/>
            <person name="Tosato V."/>
            <person name="Uchiyama S."/>
            <person name="Vandenbol M."/>
            <person name="Vannier F."/>
            <person name="Vassarotti A."/>
            <person name="Viari A."/>
            <person name="Wambutt R."/>
            <person name="Wedler E."/>
            <person name="Wedler H."/>
            <person name="Weitzenegger T."/>
            <person name="Winters P."/>
            <person name="Wipat A."/>
            <person name="Yamamoto H."/>
            <person name="Yamane K."/>
            <person name="Yasumoto K."/>
            <person name="Yata K."/>
            <person name="Yoshida K."/>
            <person name="Yoshikawa H.-F."/>
            <person name="Zumstein E."/>
            <person name="Yoshikawa H."/>
            <person name="Danchin A."/>
        </authorList>
    </citation>
    <scope>NUCLEOTIDE SEQUENCE [LARGE SCALE GENOMIC DNA]</scope>
    <source>
        <strain>168</strain>
    </source>
</reference>
<feature type="chain" id="PRO_0000181844" description="Ribosome maturation factor RimP">
    <location>
        <begin position="1"/>
        <end position="156"/>
    </location>
</feature>
<name>RIMP_BACSU</name>
<organism>
    <name type="scientific">Bacillus subtilis (strain 168)</name>
    <dbReference type="NCBI Taxonomy" id="224308"/>
    <lineage>
        <taxon>Bacteria</taxon>
        <taxon>Bacillati</taxon>
        <taxon>Bacillota</taxon>
        <taxon>Bacilli</taxon>
        <taxon>Bacillales</taxon>
        <taxon>Bacillaceae</taxon>
        <taxon>Bacillus</taxon>
    </lineage>
</organism>
<protein>
    <recommendedName>
        <fullName evidence="1">Ribosome maturation factor RimP</fullName>
    </recommendedName>
    <alternativeName>
        <fullName>P15A</fullName>
    </alternativeName>
</protein>
<sequence>MSKKVTDTVQEMAQPIVDSLQLELVDIEFVKEGQSWFLRVFIDSDDGVDIEECAKVSEALSEKLDEADPISQNYFLEVSSPGAERPLKKKADFEKSLGKNVYIKTYEPIDGVKVFEGELAEFDGQTVTVEITIKTRKKRINIPYEKIANARLAVTF</sequence>
<keyword id="KW-0963">Cytoplasm</keyword>
<keyword id="KW-1185">Reference proteome</keyword>
<keyword id="KW-0690">Ribosome biogenesis</keyword>
<evidence type="ECO:0000255" key="1">
    <source>
        <dbReference type="HAMAP-Rule" id="MF_01077"/>
    </source>
</evidence>
<comment type="function">
    <text evidence="1">Required for maturation of 30S ribosomal subunits.</text>
</comment>
<comment type="subcellular location">
    <subcellularLocation>
        <location evidence="1">Cytoplasm</location>
    </subcellularLocation>
</comment>
<comment type="similarity">
    <text evidence="1">Belongs to the RimP family.</text>
</comment>